<evidence type="ECO:0000255" key="1">
    <source>
        <dbReference type="HAMAP-Rule" id="MF_00172"/>
    </source>
</evidence>
<reference key="1">
    <citation type="submission" date="2008-08" db="EMBL/GenBank/DDBJ databases">
        <title>The complete genome sequence of Thermodesulfovibrio yellowstonii strain ATCC 51303 / DSM 11347 / YP87.</title>
        <authorList>
            <person name="Dodson R.J."/>
            <person name="Durkin A.S."/>
            <person name="Wu M."/>
            <person name="Eisen J."/>
            <person name="Sutton G."/>
        </authorList>
    </citation>
    <scope>NUCLEOTIDE SEQUENCE [LARGE SCALE GENOMIC DNA]</scope>
    <source>
        <strain>ATCC 51303 / DSM 11347 / YP87</strain>
    </source>
</reference>
<accession>B5YJD3</accession>
<dbReference type="EC" id="2.1.1.14" evidence="1"/>
<dbReference type="EMBL" id="CP001147">
    <property type="protein sequence ID" value="ACI21086.1"/>
    <property type="molecule type" value="Genomic_DNA"/>
</dbReference>
<dbReference type="RefSeq" id="WP_012545812.1">
    <property type="nucleotide sequence ID" value="NC_011296.1"/>
</dbReference>
<dbReference type="RefSeq" id="YP_002248348.1">
    <property type="nucleotide sequence ID" value="NC_011296.1"/>
</dbReference>
<dbReference type="SMR" id="B5YJD3"/>
<dbReference type="FunCoup" id="B5YJD3">
    <property type="interactions" value="279"/>
</dbReference>
<dbReference type="STRING" id="289376.THEYE_A0504"/>
<dbReference type="EnsemblBacteria" id="ACI21086">
    <property type="protein sequence ID" value="ACI21086"/>
    <property type="gene ID" value="THEYE_A0504"/>
</dbReference>
<dbReference type="KEGG" id="tye:THEYE_A0504"/>
<dbReference type="PATRIC" id="fig|289376.4.peg.499"/>
<dbReference type="eggNOG" id="COG0620">
    <property type="taxonomic scope" value="Bacteria"/>
</dbReference>
<dbReference type="HOGENOM" id="CLU_013175_0_0_0"/>
<dbReference type="InParanoid" id="B5YJD3"/>
<dbReference type="OrthoDB" id="244285at2"/>
<dbReference type="UniPathway" id="UPA00051">
    <property type="reaction ID" value="UER00082"/>
</dbReference>
<dbReference type="Proteomes" id="UP000000718">
    <property type="component" value="Chromosome"/>
</dbReference>
<dbReference type="GO" id="GO:0003871">
    <property type="term" value="F:5-methyltetrahydropteroyltriglutamate-homocysteine S-methyltransferase activity"/>
    <property type="evidence" value="ECO:0007669"/>
    <property type="project" value="UniProtKB-UniRule"/>
</dbReference>
<dbReference type="GO" id="GO:0008270">
    <property type="term" value="F:zinc ion binding"/>
    <property type="evidence" value="ECO:0007669"/>
    <property type="project" value="InterPro"/>
</dbReference>
<dbReference type="GO" id="GO:0009086">
    <property type="term" value="P:methionine biosynthetic process"/>
    <property type="evidence" value="ECO:0007669"/>
    <property type="project" value="UniProtKB-UniRule"/>
</dbReference>
<dbReference type="GO" id="GO:0032259">
    <property type="term" value="P:methylation"/>
    <property type="evidence" value="ECO:0007669"/>
    <property type="project" value="UniProtKB-KW"/>
</dbReference>
<dbReference type="CDD" id="cd03311">
    <property type="entry name" value="CIMS_C_terminal_like"/>
    <property type="match status" value="1"/>
</dbReference>
<dbReference type="CDD" id="cd03312">
    <property type="entry name" value="CIMS_N_terminal_like"/>
    <property type="match status" value="1"/>
</dbReference>
<dbReference type="Gene3D" id="3.20.20.210">
    <property type="match status" value="2"/>
</dbReference>
<dbReference type="HAMAP" id="MF_00172">
    <property type="entry name" value="Meth_synth"/>
    <property type="match status" value="1"/>
</dbReference>
<dbReference type="InterPro" id="IPR013215">
    <property type="entry name" value="Cbl-indep_Met_Synth_N"/>
</dbReference>
<dbReference type="InterPro" id="IPR006276">
    <property type="entry name" value="Cobalamin-indep_Met_synthase"/>
</dbReference>
<dbReference type="InterPro" id="IPR002629">
    <property type="entry name" value="Met_Synth_C/arc"/>
</dbReference>
<dbReference type="InterPro" id="IPR038071">
    <property type="entry name" value="UROD/MetE-like_sf"/>
</dbReference>
<dbReference type="NCBIfam" id="TIGR01371">
    <property type="entry name" value="met_syn_B12ind"/>
    <property type="match status" value="1"/>
</dbReference>
<dbReference type="NCBIfam" id="NF003556">
    <property type="entry name" value="PRK05222.1"/>
    <property type="match status" value="1"/>
</dbReference>
<dbReference type="PANTHER" id="PTHR30519">
    <property type="entry name" value="5-METHYLTETRAHYDROPTEROYLTRIGLUTAMATE--HOMOCYSTEINE METHYLTRANSFERASE"/>
    <property type="match status" value="1"/>
</dbReference>
<dbReference type="Pfam" id="PF08267">
    <property type="entry name" value="Meth_synt_1"/>
    <property type="match status" value="1"/>
</dbReference>
<dbReference type="Pfam" id="PF01717">
    <property type="entry name" value="Meth_synt_2"/>
    <property type="match status" value="1"/>
</dbReference>
<dbReference type="PIRSF" id="PIRSF000382">
    <property type="entry name" value="MeTrfase_B12_ind"/>
    <property type="match status" value="1"/>
</dbReference>
<dbReference type="SUPFAM" id="SSF51726">
    <property type="entry name" value="UROD/MetE-like"/>
    <property type="match status" value="2"/>
</dbReference>
<gene>
    <name evidence="1" type="primary">metE</name>
    <name type="ordered locus">THEYE_A0504</name>
</gene>
<sequence length="745" mass="85984">MKIKTTVFGYPRIGPKRELKKALEDYWNWKISKVELLETANSLIIQNAKVIQSSGVDLIPSNEFSLYDFILDHSVMFNAVPKRFNRISDPLDRYFAMARGTQELPALEMTKWFNTNYHYIVPEIEDEEFELMENKPLREFALLRDSLSVKTKPVIVGPFTYLKSAKLNMDRVERLSEKILPAYKKLLIKLDAAGVEEIQIDEPAMVMDMEEREIELLTGLYRELTKGLTLKVYIQTYYEAVSAYEKLVFSLSVHGFGFDLVDGKENLENILTLGFPSDKVLIAGVVSGRDPWRTDFTVVMSMLERLFRVTDKIMLSNSSPLIHLPITVEAERGHIQEDILNMLSFANERLEELTILKRAINDGAALPARKSIVHEIFSKAEVRSKISSIDEKAILRKPEFQERYRMQMDSLKLPLFPTTTIGSFPQTKEVRKFRADYKNGKITEEEYKKFIFQEIEKAVKIQEELDIDVLVHGEFERTDMVEFFAEKLKGFAITKNGWVQSYGSRCVRPPVIYGDVWRDKALTVEETLYAQSLTPRPVKGIMTGAVTILQWSYPRKDISRREIAYQIALALKEEVLELEKRGIKIIQIDEPAFREGLPLKRNKQDEYFDWTINSFRLTTADVSPFTQIHTHMCYSDFNEIIDRIYALDADVISIEASRSKGEILSAFENFRYDHGIGLGVYDIHSPRVPSVEEMIEIIERSVSLIDKSLFWINPDCGLKTRGWQETVASLKNMVLAAKAMRKREV</sequence>
<proteinExistence type="inferred from homology"/>
<keyword id="KW-0028">Amino-acid biosynthesis</keyword>
<keyword id="KW-0479">Metal-binding</keyword>
<keyword id="KW-0486">Methionine biosynthesis</keyword>
<keyword id="KW-0489">Methyltransferase</keyword>
<keyword id="KW-1185">Reference proteome</keyword>
<keyword id="KW-0677">Repeat</keyword>
<keyword id="KW-0808">Transferase</keyword>
<keyword id="KW-0862">Zinc</keyword>
<protein>
    <recommendedName>
        <fullName evidence="1">5-methyltetrahydropteroyltriglutamate--homocysteine methyltransferase</fullName>
        <ecNumber evidence="1">2.1.1.14</ecNumber>
    </recommendedName>
    <alternativeName>
        <fullName evidence="1">Cobalamin-independent methionine synthase</fullName>
    </alternativeName>
    <alternativeName>
        <fullName evidence="1">Methionine synthase, vitamin-B12 independent isozyme</fullName>
    </alternativeName>
</protein>
<feature type="chain" id="PRO_1000097850" description="5-methyltetrahydropteroyltriglutamate--homocysteine methyltransferase">
    <location>
        <begin position="1"/>
        <end position="745"/>
    </location>
</feature>
<feature type="active site" description="Proton donor" evidence="1">
    <location>
        <position position="684"/>
    </location>
</feature>
<feature type="binding site" evidence="1">
    <location>
        <begin position="17"/>
        <end position="20"/>
    </location>
    <ligand>
        <name>5-methyltetrahydropteroyltri-L-glutamate</name>
        <dbReference type="ChEBI" id="CHEBI:58207"/>
    </ligand>
</feature>
<feature type="binding site" evidence="1">
    <location>
        <position position="111"/>
    </location>
    <ligand>
        <name>5-methyltetrahydropteroyltri-L-glutamate</name>
        <dbReference type="ChEBI" id="CHEBI:58207"/>
    </ligand>
</feature>
<feature type="binding site" evidence="1">
    <location>
        <begin position="421"/>
        <end position="423"/>
    </location>
    <ligand>
        <name>L-homocysteine</name>
        <dbReference type="ChEBI" id="CHEBI:58199"/>
    </ligand>
</feature>
<feature type="binding site" evidence="1">
    <location>
        <begin position="421"/>
        <end position="423"/>
    </location>
    <ligand>
        <name>L-methionine</name>
        <dbReference type="ChEBI" id="CHEBI:57844"/>
    </ligand>
</feature>
<feature type="binding site" evidence="1">
    <location>
        <position position="474"/>
    </location>
    <ligand>
        <name>L-homocysteine</name>
        <dbReference type="ChEBI" id="CHEBI:58199"/>
    </ligand>
</feature>
<feature type="binding site" evidence="1">
    <location>
        <position position="474"/>
    </location>
    <ligand>
        <name>L-methionine</name>
        <dbReference type="ChEBI" id="CHEBI:57844"/>
    </ligand>
</feature>
<feature type="binding site" evidence="1">
    <location>
        <begin position="505"/>
        <end position="506"/>
    </location>
    <ligand>
        <name>5-methyltetrahydropteroyltri-L-glutamate</name>
        <dbReference type="ChEBI" id="CHEBI:58207"/>
    </ligand>
</feature>
<feature type="binding site" evidence="1">
    <location>
        <position position="551"/>
    </location>
    <ligand>
        <name>5-methyltetrahydropteroyltri-L-glutamate</name>
        <dbReference type="ChEBI" id="CHEBI:58207"/>
    </ligand>
</feature>
<feature type="binding site" evidence="1">
    <location>
        <position position="589"/>
    </location>
    <ligand>
        <name>L-homocysteine</name>
        <dbReference type="ChEBI" id="CHEBI:58199"/>
    </ligand>
</feature>
<feature type="binding site" evidence="1">
    <location>
        <position position="589"/>
    </location>
    <ligand>
        <name>L-methionine</name>
        <dbReference type="ChEBI" id="CHEBI:57844"/>
    </ligand>
</feature>
<feature type="binding site" evidence="1">
    <location>
        <position position="595"/>
    </location>
    <ligand>
        <name>5-methyltetrahydropteroyltri-L-glutamate</name>
        <dbReference type="ChEBI" id="CHEBI:58207"/>
    </ligand>
</feature>
<feature type="binding site" evidence="1">
    <location>
        <position position="631"/>
    </location>
    <ligand>
        <name>Zn(2+)</name>
        <dbReference type="ChEBI" id="CHEBI:29105"/>
        <note>catalytic</note>
    </ligand>
</feature>
<feature type="binding site" evidence="1">
    <location>
        <position position="633"/>
    </location>
    <ligand>
        <name>Zn(2+)</name>
        <dbReference type="ChEBI" id="CHEBI:29105"/>
        <note>catalytic</note>
    </ligand>
</feature>
<feature type="binding site" evidence="1">
    <location>
        <position position="655"/>
    </location>
    <ligand>
        <name>Zn(2+)</name>
        <dbReference type="ChEBI" id="CHEBI:29105"/>
        <note>catalytic</note>
    </ligand>
</feature>
<feature type="binding site" evidence="1">
    <location>
        <position position="716"/>
    </location>
    <ligand>
        <name>Zn(2+)</name>
        <dbReference type="ChEBI" id="CHEBI:29105"/>
        <note>catalytic</note>
    </ligand>
</feature>
<name>METE_THEYD</name>
<organism>
    <name type="scientific">Thermodesulfovibrio yellowstonii (strain ATCC 51303 / DSM 11347 / YP87)</name>
    <dbReference type="NCBI Taxonomy" id="289376"/>
    <lineage>
        <taxon>Bacteria</taxon>
        <taxon>Pseudomonadati</taxon>
        <taxon>Nitrospirota</taxon>
        <taxon>Thermodesulfovibrionia</taxon>
        <taxon>Thermodesulfovibrionales</taxon>
        <taxon>Thermodesulfovibrionaceae</taxon>
        <taxon>Thermodesulfovibrio</taxon>
    </lineage>
</organism>
<comment type="function">
    <text evidence="1">Catalyzes the transfer of a methyl group from 5-methyltetrahydrofolate to homocysteine resulting in methionine formation.</text>
</comment>
<comment type="catalytic activity">
    <reaction evidence="1">
        <text>5-methyltetrahydropteroyltri-L-glutamate + L-homocysteine = tetrahydropteroyltri-L-glutamate + L-methionine</text>
        <dbReference type="Rhea" id="RHEA:21196"/>
        <dbReference type="ChEBI" id="CHEBI:57844"/>
        <dbReference type="ChEBI" id="CHEBI:58140"/>
        <dbReference type="ChEBI" id="CHEBI:58199"/>
        <dbReference type="ChEBI" id="CHEBI:58207"/>
        <dbReference type="EC" id="2.1.1.14"/>
    </reaction>
</comment>
<comment type="cofactor">
    <cofactor evidence="1">
        <name>Zn(2+)</name>
        <dbReference type="ChEBI" id="CHEBI:29105"/>
    </cofactor>
    <text evidence="1">Binds 1 zinc ion per subunit.</text>
</comment>
<comment type="pathway">
    <text evidence="1">Amino-acid biosynthesis; L-methionine biosynthesis via de novo pathway; L-methionine from L-homocysteine (MetE route): step 1/1.</text>
</comment>
<comment type="similarity">
    <text evidence="1">Belongs to the vitamin-B12 independent methionine synthase family.</text>
</comment>